<name>NTPPA_ECOL5</name>
<sequence length="197" mass="21413">MTSLYLASGSPRRQELLAQLGVTFERIVTGIEEQRQPQESAQQYVVRLAREKAQAGVAQTAQDLPVLGADTIVILNGEVLEKPRDAEHAAQMLRKLSGQTHQVMTAVALADSQHILDCLVVTDVTFRTLTDEDIAGYVASGEPLDKAGAYGIQGLGGCFVRKINGSFHAVVGLPLVETYELLSNFNALREKRDKHDG</sequence>
<proteinExistence type="inferred from homology"/>
<organism>
    <name type="scientific">Escherichia coli O6:K15:H31 (strain 536 / UPEC)</name>
    <dbReference type="NCBI Taxonomy" id="362663"/>
    <lineage>
        <taxon>Bacteria</taxon>
        <taxon>Pseudomonadati</taxon>
        <taxon>Pseudomonadota</taxon>
        <taxon>Gammaproteobacteria</taxon>
        <taxon>Enterobacterales</taxon>
        <taxon>Enterobacteriaceae</taxon>
        <taxon>Escherichia</taxon>
    </lineage>
</organism>
<dbReference type="EC" id="3.6.1.9" evidence="1"/>
<dbReference type="EMBL" id="CP000247">
    <property type="protein sequence ID" value="ABG71311.1"/>
    <property type="molecule type" value="Genomic_DNA"/>
</dbReference>
<dbReference type="SMR" id="Q0TCL8"/>
<dbReference type="KEGG" id="ecp:ECP_3331"/>
<dbReference type="HOGENOM" id="CLU_040416_2_1_6"/>
<dbReference type="Proteomes" id="UP000009182">
    <property type="component" value="Chromosome"/>
</dbReference>
<dbReference type="GO" id="GO:0005737">
    <property type="term" value="C:cytoplasm"/>
    <property type="evidence" value="ECO:0007669"/>
    <property type="project" value="UniProtKB-SubCell"/>
</dbReference>
<dbReference type="GO" id="GO:0036218">
    <property type="term" value="F:dTTP diphosphatase activity"/>
    <property type="evidence" value="ECO:0007669"/>
    <property type="project" value="RHEA"/>
</dbReference>
<dbReference type="GO" id="GO:0036221">
    <property type="term" value="F:UTP diphosphatase activity"/>
    <property type="evidence" value="ECO:0007669"/>
    <property type="project" value="RHEA"/>
</dbReference>
<dbReference type="GO" id="GO:0009117">
    <property type="term" value="P:nucleotide metabolic process"/>
    <property type="evidence" value="ECO:0007669"/>
    <property type="project" value="UniProtKB-KW"/>
</dbReference>
<dbReference type="CDD" id="cd00555">
    <property type="entry name" value="Maf"/>
    <property type="match status" value="1"/>
</dbReference>
<dbReference type="FunFam" id="3.90.950.10:FF:000004">
    <property type="entry name" value="dTTP/UTP pyrophosphatase"/>
    <property type="match status" value="1"/>
</dbReference>
<dbReference type="Gene3D" id="3.90.950.10">
    <property type="match status" value="1"/>
</dbReference>
<dbReference type="HAMAP" id="MF_00528">
    <property type="entry name" value="Maf"/>
    <property type="match status" value="1"/>
</dbReference>
<dbReference type="InterPro" id="IPR029001">
    <property type="entry name" value="ITPase-like_fam"/>
</dbReference>
<dbReference type="InterPro" id="IPR003697">
    <property type="entry name" value="Maf-like"/>
</dbReference>
<dbReference type="NCBIfam" id="TIGR00172">
    <property type="entry name" value="maf"/>
    <property type="match status" value="1"/>
</dbReference>
<dbReference type="PANTHER" id="PTHR43213">
    <property type="entry name" value="BIFUNCTIONAL DTTP/UTP PYROPHOSPHATASE/METHYLTRANSFERASE PROTEIN-RELATED"/>
    <property type="match status" value="1"/>
</dbReference>
<dbReference type="PANTHER" id="PTHR43213:SF5">
    <property type="entry name" value="BIFUNCTIONAL DTTP_UTP PYROPHOSPHATASE_METHYLTRANSFERASE PROTEIN-RELATED"/>
    <property type="match status" value="1"/>
</dbReference>
<dbReference type="Pfam" id="PF02545">
    <property type="entry name" value="Maf"/>
    <property type="match status" value="1"/>
</dbReference>
<dbReference type="PIRSF" id="PIRSF006305">
    <property type="entry name" value="Maf"/>
    <property type="match status" value="1"/>
</dbReference>
<dbReference type="SUPFAM" id="SSF52972">
    <property type="entry name" value="ITPase-like"/>
    <property type="match status" value="1"/>
</dbReference>
<evidence type="ECO:0000255" key="1">
    <source>
        <dbReference type="HAMAP-Rule" id="MF_00528"/>
    </source>
</evidence>
<feature type="chain" id="PRO_0000267311" description="dTTP/UTP pyrophosphatase">
    <location>
        <begin position="1"/>
        <end position="197"/>
    </location>
</feature>
<feature type="active site" description="Proton acceptor" evidence="1">
    <location>
        <position position="70"/>
    </location>
</feature>
<feature type="site" description="Important for substrate specificity" evidence="1">
    <location>
        <position position="12"/>
    </location>
</feature>
<feature type="site" description="Important for substrate specificity" evidence="1">
    <location>
        <position position="71"/>
    </location>
</feature>
<feature type="site" description="Important for substrate specificity" evidence="1">
    <location>
        <position position="153"/>
    </location>
</feature>
<keyword id="KW-0963">Cytoplasm</keyword>
<keyword id="KW-0378">Hydrolase</keyword>
<keyword id="KW-0546">Nucleotide metabolism</keyword>
<accession>Q0TCL8</accession>
<protein>
    <recommendedName>
        <fullName evidence="1">dTTP/UTP pyrophosphatase</fullName>
        <shortName evidence="1">dTTPase/UTPase</shortName>
        <ecNumber evidence="1">3.6.1.9</ecNumber>
    </recommendedName>
    <alternativeName>
        <fullName evidence="1">Nucleoside triphosphate pyrophosphatase</fullName>
    </alternativeName>
    <alternativeName>
        <fullName evidence="1">Nucleotide pyrophosphatase</fullName>
        <shortName evidence="1">Nucleotide PPase</shortName>
    </alternativeName>
</protein>
<comment type="function">
    <text evidence="1">Nucleoside triphosphate pyrophosphatase that hydrolyzes dTTP and UTP. May have a dual role in cell division arrest and in preventing the incorporation of modified nucleotides into cellular nucleic acids.</text>
</comment>
<comment type="catalytic activity">
    <reaction evidence="1">
        <text>dTTP + H2O = dTMP + diphosphate + H(+)</text>
        <dbReference type="Rhea" id="RHEA:28534"/>
        <dbReference type="ChEBI" id="CHEBI:15377"/>
        <dbReference type="ChEBI" id="CHEBI:15378"/>
        <dbReference type="ChEBI" id="CHEBI:33019"/>
        <dbReference type="ChEBI" id="CHEBI:37568"/>
        <dbReference type="ChEBI" id="CHEBI:63528"/>
        <dbReference type="EC" id="3.6.1.9"/>
    </reaction>
</comment>
<comment type="catalytic activity">
    <reaction evidence="1">
        <text>UTP + H2O = UMP + diphosphate + H(+)</text>
        <dbReference type="Rhea" id="RHEA:29395"/>
        <dbReference type="ChEBI" id="CHEBI:15377"/>
        <dbReference type="ChEBI" id="CHEBI:15378"/>
        <dbReference type="ChEBI" id="CHEBI:33019"/>
        <dbReference type="ChEBI" id="CHEBI:46398"/>
        <dbReference type="ChEBI" id="CHEBI:57865"/>
        <dbReference type="EC" id="3.6.1.9"/>
    </reaction>
</comment>
<comment type="cofactor">
    <cofactor evidence="1">
        <name>a divalent metal cation</name>
        <dbReference type="ChEBI" id="CHEBI:60240"/>
    </cofactor>
</comment>
<comment type="subcellular location">
    <subcellularLocation>
        <location evidence="1">Cytoplasm</location>
    </subcellularLocation>
</comment>
<comment type="similarity">
    <text evidence="1">Belongs to the Maf family. YhdE subfamily.</text>
</comment>
<gene>
    <name type="primary">yceF2</name>
    <name type="ordered locus">ECP_3331</name>
</gene>
<reference key="1">
    <citation type="journal article" date="2006" name="Mol. Microbiol.">
        <title>Role of pathogenicity island-associated integrases in the genome plasticity of uropathogenic Escherichia coli strain 536.</title>
        <authorList>
            <person name="Hochhut B."/>
            <person name="Wilde C."/>
            <person name="Balling G."/>
            <person name="Middendorf B."/>
            <person name="Dobrindt U."/>
            <person name="Brzuszkiewicz E."/>
            <person name="Gottschalk G."/>
            <person name="Carniel E."/>
            <person name="Hacker J."/>
        </authorList>
    </citation>
    <scope>NUCLEOTIDE SEQUENCE [LARGE SCALE GENOMIC DNA]</scope>
    <source>
        <strain>536 / UPEC</strain>
    </source>
</reference>